<protein>
    <recommendedName>
        <fullName evidence="1">Adenylate kinase</fullName>
        <shortName evidence="1">AK</shortName>
        <ecNumber evidence="1">2.7.4.3</ecNumber>
    </recommendedName>
    <alternativeName>
        <fullName evidence="1">ATP-AMP transphosphorylase</fullName>
    </alternativeName>
    <alternativeName>
        <fullName evidence="1">ATP:AMP phosphotransferase</fullName>
    </alternativeName>
    <alternativeName>
        <fullName evidence="1">Adenylate monophosphate kinase</fullName>
    </alternativeName>
</protein>
<proteinExistence type="inferred from homology"/>
<comment type="function">
    <text evidence="1">Catalyzes the reversible transfer of the terminal phosphate group between ATP and AMP. Plays an important role in cellular energy homeostasis and in adenine nucleotide metabolism.</text>
</comment>
<comment type="catalytic activity">
    <reaction evidence="1">
        <text>AMP + ATP = 2 ADP</text>
        <dbReference type="Rhea" id="RHEA:12973"/>
        <dbReference type="ChEBI" id="CHEBI:30616"/>
        <dbReference type="ChEBI" id="CHEBI:456215"/>
        <dbReference type="ChEBI" id="CHEBI:456216"/>
        <dbReference type="EC" id="2.7.4.3"/>
    </reaction>
</comment>
<comment type="pathway">
    <text evidence="1">Purine metabolism; AMP biosynthesis via salvage pathway; AMP from ADP: step 1/1.</text>
</comment>
<comment type="subunit">
    <text evidence="1">Monomer.</text>
</comment>
<comment type="subcellular location">
    <subcellularLocation>
        <location evidence="1">Cytoplasm</location>
    </subcellularLocation>
</comment>
<comment type="domain">
    <text evidence="1">Consists of three domains, a large central CORE domain and two small peripheral domains, NMPbind and LID, which undergo movements during catalysis. The LID domain closes over the site of phosphoryl transfer upon ATP binding. Assembling and dissambling the active center during each catalytic cycle provides an effective means to prevent ATP hydrolysis.</text>
</comment>
<comment type="similarity">
    <text evidence="1">Belongs to the adenylate kinase family.</text>
</comment>
<organism>
    <name type="scientific">Tropheryma whipplei (strain Twist)</name>
    <name type="common">Whipple's bacillus</name>
    <dbReference type="NCBI Taxonomy" id="203267"/>
    <lineage>
        <taxon>Bacteria</taxon>
        <taxon>Bacillati</taxon>
        <taxon>Actinomycetota</taxon>
        <taxon>Actinomycetes</taxon>
        <taxon>Micrococcales</taxon>
        <taxon>Tropherymataceae</taxon>
        <taxon>Tropheryma</taxon>
    </lineage>
</organism>
<gene>
    <name evidence="1" type="primary">adk</name>
    <name type="ordered locus">TWT_534</name>
</gene>
<keyword id="KW-0067">ATP-binding</keyword>
<keyword id="KW-0963">Cytoplasm</keyword>
<keyword id="KW-0418">Kinase</keyword>
<keyword id="KW-0545">Nucleotide biosynthesis</keyword>
<keyword id="KW-0547">Nucleotide-binding</keyword>
<keyword id="KW-1185">Reference proteome</keyword>
<keyword id="KW-0808">Transferase</keyword>
<reference key="1">
    <citation type="journal article" date="2003" name="Genome Res.">
        <title>Tropheryma whipplei twist: a human pathogenic Actinobacteria with a reduced genome.</title>
        <authorList>
            <person name="Raoult D."/>
            <person name="Ogata H."/>
            <person name="Audic S."/>
            <person name="Robert C."/>
            <person name="Suhre K."/>
            <person name="Drancourt M."/>
            <person name="Claverie J.-M."/>
        </authorList>
    </citation>
    <scope>NUCLEOTIDE SEQUENCE [LARGE SCALE GENOMIC DNA]</scope>
    <source>
        <strain>Twist</strain>
    </source>
</reference>
<dbReference type="EC" id="2.7.4.3" evidence="1"/>
<dbReference type="EMBL" id="AE014184">
    <property type="protein sequence ID" value="AAO44631.1"/>
    <property type="molecule type" value="Genomic_DNA"/>
</dbReference>
<dbReference type="SMR" id="Q83G05"/>
<dbReference type="STRING" id="203267.TWT_534"/>
<dbReference type="KEGG" id="twh:TWT_534"/>
<dbReference type="eggNOG" id="COG0563">
    <property type="taxonomic scope" value="Bacteria"/>
</dbReference>
<dbReference type="HOGENOM" id="CLU_032354_4_1_11"/>
<dbReference type="OrthoDB" id="9805030at2"/>
<dbReference type="UniPathway" id="UPA00588">
    <property type="reaction ID" value="UER00649"/>
</dbReference>
<dbReference type="Proteomes" id="UP000002200">
    <property type="component" value="Chromosome"/>
</dbReference>
<dbReference type="GO" id="GO:0005737">
    <property type="term" value="C:cytoplasm"/>
    <property type="evidence" value="ECO:0007669"/>
    <property type="project" value="UniProtKB-SubCell"/>
</dbReference>
<dbReference type="GO" id="GO:0004017">
    <property type="term" value="F:adenylate kinase activity"/>
    <property type="evidence" value="ECO:0007669"/>
    <property type="project" value="UniProtKB-UniRule"/>
</dbReference>
<dbReference type="GO" id="GO:0005524">
    <property type="term" value="F:ATP binding"/>
    <property type="evidence" value="ECO:0007669"/>
    <property type="project" value="UniProtKB-UniRule"/>
</dbReference>
<dbReference type="GO" id="GO:0044209">
    <property type="term" value="P:AMP salvage"/>
    <property type="evidence" value="ECO:0007669"/>
    <property type="project" value="UniProtKB-UniRule"/>
</dbReference>
<dbReference type="CDD" id="cd01428">
    <property type="entry name" value="ADK"/>
    <property type="match status" value="1"/>
</dbReference>
<dbReference type="Gene3D" id="3.40.50.300">
    <property type="entry name" value="P-loop containing nucleotide triphosphate hydrolases"/>
    <property type="match status" value="1"/>
</dbReference>
<dbReference type="HAMAP" id="MF_00235">
    <property type="entry name" value="Adenylate_kinase_Adk"/>
    <property type="match status" value="1"/>
</dbReference>
<dbReference type="InterPro" id="IPR000850">
    <property type="entry name" value="Adenylat/UMP-CMP_kin"/>
</dbReference>
<dbReference type="InterPro" id="IPR033690">
    <property type="entry name" value="Adenylat_kinase_CS"/>
</dbReference>
<dbReference type="InterPro" id="IPR027417">
    <property type="entry name" value="P-loop_NTPase"/>
</dbReference>
<dbReference type="PANTHER" id="PTHR23359">
    <property type="entry name" value="NUCLEOTIDE KINASE"/>
    <property type="match status" value="1"/>
</dbReference>
<dbReference type="Pfam" id="PF00406">
    <property type="entry name" value="ADK"/>
    <property type="match status" value="1"/>
</dbReference>
<dbReference type="PRINTS" id="PR00094">
    <property type="entry name" value="ADENYLTKNASE"/>
</dbReference>
<dbReference type="SUPFAM" id="SSF52540">
    <property type="entry name" value="P-loop containing nucleoside triphosphate hydrolases"/>
    <property type="match status" value="1"/>
</dbReference>
<dbReference type="PROSITE" id="PS00113">
    <property type="entry name" value="ADENYLATE_KINASE"/>
    <property type="match status" value="1"/>
</dbReference>
<sequence>MRAIMVGPPGSGKGTQCGLIQSRLGISVIATGDVFRERMKTDMALRDIVSSGGYVSDSTTNRIVEDCLDKEDVSSGFVLDGYPRTLQQLDFLEGFLKRRALTLDAVFSLEVATDLLIERLRARSKESGRTDDRDSVIARRLEIYTEMTLPIIDACEEKGLLHRIDASKGIEEVFQSIKDVFDRVTI</sequence>
<accession>Q83G05</accession>
<feature type="chain" id="PRO_0000158880" description="Adenylate kinase">
    <location>
        <begin position="1"/>
        <end position="186"/>
    </location>
</feature>
<feature type="region of interest" description="NMP" evidence="1">
    <location>
        <begin position="30"/>
        <end position="55"/>
    </location>
</feature>
<feature type="region of interest" description="LID" evidence="1">
    <location>
        <begin position="122"/>
        <end position="132"/>
    </location>
</feature>
<feature type="binding site" evidence="1">
    <location>
        <begin position="10"/>
        <end position="15"/>
    </location>
    <ligand>
        <name>ATP</name>
        <dbReference type="ChEBI" id="CHEBI:30616"/>
    </ligand>
</feature>
<feature type="binding site" evidence="1">
    <location>
        <position position="31"/>
    </location>
    <ligand>
        <name>AMP</name>
        <dbReference type="ChEBI" id="CHEBI:456215"/>
    </ligand>
</feature>
<feature type="binding site" evidence="1">
    <location>
        <position position="36"/>
    </location>
    <ligand>
        <name>AMP</name>
        <dbReference type="ChEBI" id="CHEBI:456215"/>
    </ligand>
</feature>
<feature type="binding site" evidence="1">
    <location>
        <begin position="53"/>
        <end position="55"/>
    </location>
    <ligand>
        <name>AMP</name>
        <dbReference type="ChEBI" id="CHEBI:456215"/>
    </ligand>
</feature>
<feature type="binding site" evidence="1">
    <location>
        <begin position="81"/>
        <end position="84"/>
    </location>
    <ligand>
        <name>AMP</name>
        <dbReference type="ChEBI" id="CHEBI:456215"/>
    </ligand>
</feature>
<feature type="binding site" evidence="1">
    <location>
        <position position="88"/>
    </location>
    <ligand>
        <name>AMP</name>
        <dbReference type="ChEBI" id="CHEBI:456215"/>
    </ligand>
</feature>
<feature type="binding site" evidence="1">
    <location>
        <position position="123"/>
    </location>
    <ligand>
        <name>ATP</name>
        <dbReference type="ChEBI" id="CHEBI:30616"/>
    </ligand>
</feature>
<feature type="binding site" evidence="1">
    <location>
        <position position="129"/>
    </location>
    <ligand>
        <name>AMP</name>
        <dbReference type="ChEBI" id="CHEBI:456215"/>
    </ligand>
</feature>
<feature type="binding site" evidence="1">
    <location>
        <position position="140"/>
    </location>
    <ligand>
        <name>AMP</name>
        <dbReference type="ChEBI" id="CHEBI:456215"/>
    </ligand>
</feature>
<feature type="binding site" evidence="1">
    <location>
        <position position="168"/>
    </location>
    <ligand>
        <name>ATP</name>
        <dbReference type="ChEBI" id="CHEBI:30616"/>
    </ligand>
</feature>
<name>KAD_TROWT</name>
<evidence type="ECO:0000255" key="1">
    <source>
        <dbReference type="HAMAP-Rule" id="MF_00235"/>
    </source>
</evidence>